<dbReference type="EMBL" id="CP000423">
    <property type="protein sequence ID" value="ABJ69775.1"/>
    <property type="molecule type" value="Genomic_DNA"/>
</dbReference>
<dbReference type="RefSeq" id="WP_003564285.1">
    <property type="nucleotide sequence ID" value="NC_008526.1"/>
</dbReference>
<dbReference type="RefSeq" id="YP_806217.1">
    <property type="nucleotide sequence ID" value="NC_008526.1"/>
</dbReference>
<dbReference type="SMR" id="Q03AJ7"/>
<dbReference type="STRING" id="321967.LSEI_0977"/>
<dbReference type="PaxDb" id="321967-LSEI_0977"/>
<dbReference type="GeneID" id="57089625"/>
<dbReference type="KEGG" id="lca:LSEI_0977"/>
<dbReference type="PATRIC" id="fig|321967.11.peg.947"/>
<dbReference type="HOGENOM" id="CLU_108953_0_0_9"/>
<dbReference type="Proteomes" id="UP000001651">
    <property type="component" value="Chromosome"/>
</dbReference>
<dbReference type="GO" id="GO:0005829">
    <property type="term" value="C:cytosol"/>
    <property type="evidence" value="ECO:0007669"/>
    <property type="project" value="TreeGrafter"/>
</dbReference>
<dbReference type="GO" id="GO:0003723">
    <property type="term" value="F:RNA binding"/>
    <property type="evidence" value="ECO:0007669"/>
    <property type="project" value="UniProtKB-UniRule"/>
</dbReference>
<dbReference type="GO" id="GO:0070929">
    <property type="term" value="P:trans-translation"/>
    <property type="evidence" value="ECO:0007669"/>
    <property type="project" value="UniProtKB-UniRule"/>
</dbReference>
<dbReference type="CDD" id="cd09294">
    <property type="entry name" value="SmpB"/>
    <property type="match status" value="1"/>
</dbReference>
<dbReference type="Gene3D" id="2.40.280.10">
    <property type="match status" value="1"/>
</dbReference>
<dbReference type="HAMAP" id="MF_00023">
    <property type="entry name" value="SmpB"/>
    <property type="match status" value="1"/>
</dbReference>
<dbReference type="InterPro" id="IPR023620">
    <property type="entry name" value="SmpB"/>
</dbReference>
<dbReference type="InterPro" id="IPR000037">
    <property type="entry name" value="SsrA-bd_prot"/>
</dbReference>
<dbReference type="InterPro" id="IPR020081">
    <property type="entry name" value="SsrA-bd_prot_CS"/>
</dbReference>
<dbReference type="NCBIfam" id="NF003843">
    <property type="entry name" value="PRK05422.1"/>
    <property type="match status" value="1"/>
</dbReference>
<dbReference type="NCBIfam" id="TIGR00086">
    <property type="entry name" value="smpB"/>
    <property type="match status" value="1"/>
</dbReference>
<dbReference type="PANTHER" id="PTHR30308:SF2">
    <property type="entry name" value="SSRA-BINDING PROTEIN"/>
    <property type="match status" value="1"/>
</dbReference>
<dbReference type="PANTHER" id="PTHR30308">
    <property type="entry name" value="TMRNA-BINDING COMPONENT OF TRANS-TRANSLATION TAGGING COMPLEX"/>
    <property type="match status" value="1"/>
</dbReference>
<dbReference type="Pfam" id="PF01668">
    <property type="entry name" value="SmpB"/>
    <property type="match status" value="1"/>
</dbReference>
<dbReference type="SUPFAM" id="SSF74982">
    <property type="entry name" value="Small protein B (SmpB)"/>
    <property type="match status" value="1"/>
</dbReference>
<dbReference type="PROSITE" id="PS01317">
    <property type="entry name" value="SSRP"/>
    <property type="match status" value="1"/>
</dbReference>
<gene>
    <name evidence="1" type="primary">smpB</name>
    <name type="ordered locus">LSEI_0977</name>
</gene>
<protein>
    <recommendedName>
        <fullName evidence="1">SsrA-binding protein</fullName>
    </recommendedName>
    <alternativeName>
        <fullName evidence="1">Small protein B</fullName>
    </alternativeName>
</protein>
<evidence type="ECO:0000255" key="1">
    <source>
        <dbReference type="HAMAP-Rule" id="MF_00023"/>
    </source>
</evidence>
<reference key="1">
    <citation type="journal article" date="2006" name="Proc. Natl. Acad. Sci. U.S.A.">
        <title>Comparative genomics of the lactic acid bacteria.</title>
        <authorList>
            <person name="Makarova K.S."/>
            <person name="Slesarev A."/>
            <person name="Wolf Y.I."/>
            <person name="Sorokin A."/>
            <person name="Mirkin B."/>
            <person name="Koonin E.V."/>
            <person name="Pavlov A."/>
            <person name="Pavlova N."/>
            <person name="Karamychev V."/>
            <person name="Polouchine N."/>
            <person name="Shakhova V."/>
            <person name="Grigoriev I."/>
            <person name="Lou Y."/>
            <person name="Rohksar D."/>
            <person name="Lucas S."/>
            <person name="Huang K."/>
            <person name="Goodstein D.M."/>
            <person name="Hawkins T."/>
            <person name="Plengvidhya V."/>
            <person name="Welker D."/>
            <person name="Hughes J."/>
            <person name="Goh Y."/>
            <person name="Benson A."/>
            <person name="Baldwin K."/>
            <person name="Lee J.-H."/>
            <person name="Diaz-Muniz I."/>
            <person name="Dosti B."/>
            <person name="Smeianov V."/>
            <person name="Wechter W."/>
            <person name="Barabote R."/>
            <person name="Lorca G."/>
            <person name="Altermann E."/>
            <person name="Barrangou R."/>
            <person name="Ganesan B."/>
            <person name="Xie Y."/>
            <person name="Rawsthorne H."/>
            <person name="Tamir D."/>
            <person name="Parker C."/>
            <person name="Breidt F."/>
            <person name="Broadbent J.R."/>
            <person name="Hutkins R."/>
            <person name="O'Sullivan D."/>
            <person name="Steele J."/>
            <person name="Unlu G."/>
            <person name="Saier M.H. Jr."/>
            <person name="Klaenhammer T."/>
            <person name="Richardson P."/>
            <person name="Kozyavkin S."/>
            <person name="Weimer B.C."/>
            <person name="Mills D.A."/>
        </authorList>
    </citation>
    <scope>NUCLEOTIDE SEQUENCE [LARGE SCALE GENOMIC DNA]</scope>
    <source>
        <strain>ATCC 334 / BCRC 17002 / CCUG 31169 / CIP 107868 / KCTC 3260 / NRRL B-441</strain>
    </source>
</reference>
<organism>
    <name type="scientific">Lacticaseibacillus paracasei (strain ATCC 334 / BCRC 17002 / CCUG 31169 / CIP 107868 / KCTC 3260 / NRRL B-441)</name>
    <name type="common">Lactobacillus paracasei</name>
    <dbReference type="NCBI Taxonomy" id="321967"/>
    <lineage>
        <taxon>Bacteria</taxon>
        <taxon>Bacillati</taxon>
        <taxon>Bacillota</taxon>
        <taxon>Bacilli</taxon>
        <taxon>Lactobacillales</taxon>
        <taxon>Lactobacillaceae</taxon>
        <taxon>Lacticaseibacillus</taxon>
    </lineage>
</organism>
<feature type="chain" id="PRO_1000002071" description="SsrA-binding protein">
    <location>
        <begin position="1"/>
        <end position="157"/>
    </location>
</feature>
<proteinExistence type="inferred from homology"/>
<accession>Q03AJ7</accession>
<comment type="function">
    <text evidence="1">Required for rescue of stalled ribosomes mediated by trans-translation. Binds to transfer-messenger RNA (tmRNA), required for stable association of tmRNA with ribosomes. tmRNA and SmpB together mimic tRNA shape, replacing the anticodon stem-loop with SmpB. tmRNA is encoded by the ssrA gene; the 2 termini fold to resemble tRNA(Ala) and it encodes a 'tag peptide', a short internal open reading frame. During trans-translation Ala-aminoacylated tmRNA acts like a tRNA, entering the A-site of stalled ribosomes, displacing the stalled mRNA. The ribosome then switches to translate the ORF on the tmRNA; the nascent peptide is terminated with the 'tag peptide' encoded by the tmRNA and targeted for degradation. The ribosome is freed to recommence translation, which seems to be the essential function of trans-translation.</text>
</comment>
<comment type="subcellular location">
    <subcellularLocation>
        <location evidence="1">Cytoplasm</location>
    </subcellularLocation>
    <text evidence="1">The tmRNA-SmpB complex associates with stalled 70S ribosomes.</text>
</comment>
<comment type="similarity">
    <text evidence="1">Belongs to the SmpB family.</text>
</comment>
<sequence>MAKKHRQKPDNLLAQNKKAGHDYNILDTYEAGIALTGTEIKSVRDGKLNLRDGFARIRNNEAWLENVHISPYKEGNLFNVDPMRNRKLLLHKREIRKLGQMTARQGVTLVPLRMYLKHGYAKVLIGVAEGKHNYDKRETLKRKDQEREVQRALKARY</sequence>
<keyword id="KW-0963">Cytoplasm</keyword>
<keyword id="KW-1185">Reference proteome</keyword>
<keyword id="KW-0694">RNA-binding</keyword>
<name>SSRP_LACP3</name>